<sequence>MGQKWKLYEIKDGKVIRKNKFCPRCGPGVFMADHGDRWACGKCGYTEWKK</sequence>
<name>RS27A_PYRFU</name>
<proteinExistence type="evidence at protein level"/>
<comment type="cofactor">
    <cofactor evidence="1">
        <name>Zn(2+)</name>
        <dbReference type="ChEBI" id="CHEBI:29105"/>
    </cofactor>
    <text evidence="1">Binds 1 zinc ion per subunit.</text>
</comment>
<comment type="subunit">
    <text evidence="1 2">Part of the 30S ribosomal subunit.</text>
</comment>
<comment type="similarity">
    <text evidence="1">Belongs to the eukaryotic ribosomal protein eS31 family.</text>
</comment>
<reference key="1">
    <citation type="journal article" date="1999" name="Genetics">
        <title>Divergence of the hyperthermophilic archaea Pyrococcus furiosus and P. horikoshii inferred from complete genomic sequences.</title>
        <authorList>
            <person name="Maeder D.L."/>
            <person name="Weiss R.B."/>
            <person name="Dunn D.M."/>
            <person name="Cherry J.L."/>
            <person name="Gonzalez J.M."/>
            <person name="DiRuggiero J."/>
            <person name="Robb F.T."/>
        </authorList>
    </citation>
    <scope>NUCLEOTIDE SEQUENCE [LARGE SCALE GENOMIC DNA]</scope>
    <source>
        <strain>ATCC 43587 / DSM 3638 / JCM 8422 / Vc1</strain>
    </source>
</reference>
<reference evidence="3" key="2">
    <citation type="journal article" date="2013" name="Nucleic Acids Res.">
        <title>Promiscuous behaviour of archaeal ribosomal proteins: implications for eukaryotic ribosome evolution.</title>
        <authorList>
            <person name="Armache J.P."/>
            <person name="Anger A.M."/>
            <person name="Marquez V."/>
            <person name="Franckenberg S."/>
            <person name="Frohlich T."/>
            <person name="Villa E."/>
            <person name="Berninghausen O."/>
            <person name="Thomm M."/>
            <person name="Arnold G.J."/>
            <person name="Beckmann R."/>
            <person name="Wilson D.N."/>
        </authorList>
    </citation>
    <scope>STRUCTURE BY ELECTRON MICROSCOPY (6.60 ANGSTROMS) IN THE 70S RIBOSOME</scope>
    <scope>SUBUNIT</scope>
</reference>
<organism>
    <name type="scientific">Pyrococcus furiosus (strain ATCC 43587 / DSM 3638 / JCM 8422 / Vc1)</name>
    <dbReference type="NCBI Taxonomy" id="186497"/>
    <lineage>
        <taxon>Archaea</taxon>
        <taxon>Methanobacteriati</taxon>
        <taxon>Methanobacteriota</taxon>
        <taxon>Thermococci</taxon>
        <taxon>Thermococcales</taxon>
        <taxon>Thermococcaceae</taxon>
        <taxon>Pyrococcus</taxon>
    </lineage>
</organism>
<keyword id="KW-0002">3D-structure</keyword>
<keyword id="KW-0479">Metal-binding</keyword>
<keyword id="KW-1185">Reference proteome</keyword>
<keyword id="KW-0687">Ribonucleoprotein</keyword>
<keyword id="KW-0689">Ribosomal protein</keyword>
<keyword id="KW-0862">Zinc</keyword>
<keyword id="KW-0863">Zinc-finger</keyword>
<feature type="chain" id="PRO_0000137703" description="Small ribosomal subunit protein eS31">
    <location>
        <begin position="1"/>
        <end position="50"/>
    </location>
</feature>
<feature type="zinc finger region" description="C4-type" evidence="1">
    <location>
        <begin position="22"/>
        <end position="43"/>
    </location>
</feature>
<feature type="binding site" evidence="1">
    <location>
        <position position="22"/>
    </location>
    <ligand>
        <name>Zn(2+)</name>
        <dbReference type="ChEBI" id="CHEBI:29105"/>
    </ligand>
</feature>
<feature type="binding site" evidence="1">
    <location>
        <position position="25"/>
    </location>
    <ligand>
        <name>Zn(2+)</name>
        <dbReference type="ChEBI" id="CHEBI:29105"/>
    </ligand>
</feature>
<feature type="binding site" evidence="1">
    <location>
        <position position="40"/>
    </location>
    <ligand>
        <name>Zn(2+)</name>
        <dbReference type="ChEBI" id="CHEBI:29105"/>
    </ligand>
</feature>
<feature type="binding site" evidence="1">
    <location>
        <position position="43"/>
    </location>
    <ligand>
        <name>Zn(2+)</name>
        <dbReference type="ChEBI" id="CHEBI:29105"/>
    </ligand>
</feature>
<accession>Q8U443</accession>
<protein>
    <recommendedName>
        <fullName evidence="1">Small ribosomal subunit protein eS31</fullName>
    </recommendedName>
    <alternativeName>
        <fullName>30S ribosomal protein S27ae</fullName>
    </alternativeName>
</protein>
<gene>
    <name evidence="1" type="primary">rps27ae</name>
    <name type="ordered locus">PF0252</name>
</gene>
<evidence type="ECO:0000255" key="1">
    <source>
        <dbReference type="HAMAP-Rule" id="MF_00777"/>
    </source>
</evidence>
<evidence type="ECO:0000269" key="2">
    <source>
    </source>
</evidence>
<evidence type="ECO:0007744" key="3">
    <source>
        <dbReference type="PDB" id="4V6U"/>
    </source>
</evidence>
<dbReference type="EMBL" id="AE009950">
    <property type="protein sequence ID" value="AAL80376.1"/>
    <property type="molecule type" value="Genomic_DNA"/>
</dbReference>
<dbReference type="RefSeq" id="WP_011011367.1">
    <property type="nucleotide sequence ID" value="NZ_CP023154.1"/>
</dbReference>
<dbReference type="PDB" id="4V4N">
    <property type="method" value="EM"/>
    <property type="resolution" value="9.00 A"/>
    <property type="chains" value="Y=1-50"/>
</dbReference>
<dbReference type="PDB" id="4V6U">
    <property type="method" value="EM"/>
    <property type="resolution" value="6.60 A"/>
    <property type="chains" value="AY=1-50"/>
</dbReference>
<dbReference type="PDB" id="5JB3">
    <property type="method" value="EM"/>
    <property type="resolution" value="5.34 A"/>
    <property type="chains" value="Y=1-50"/>
</dbReference>
<dbReference type="PDB" id="5JBH">
    <property type="method" value="EM"/>
    <property type="resolution" value="5.34 A"/>
    <property type="chains" value="Y=1-50"/>
</dbReference>
<dbReference type="PDBsum" id="4V4N"/>
<dbReference type="PDBsum" id="4V6U"/>
<dbReference type="PDBsum" id="5JB3"/>
<dbReference type="PDBsum" id="5JBH"/>
<dbReference type="EMDB" id="EMD-50611"/>
<dbReference type="EMDB" id="EMD-50612"/>
<dbReference type="EMDB" id="EMD-50613"/>
<dbReference type="SMR" id="Q8U443"/>
<dbReference type="STRING" id="186497.PF0252"/>
<dbReference type="PaxDb" id="186497-PF0252"/>
<dbReference type="KEGG" id="pfu:PF0252"/>
<dbReference type="PATRIC" id="fig|186497.12.peg.264"/>
<dbReference type="eggNOG" id="arCOG04183">
    <property type="taxonomic scope" value="Archaea"/>
</dbReference>
<dbReference type="HOGENOM" id="CLU_179743_2_0_2"/>
<dbReference type="OrthoDB" id="25142at2157"/>
<dbReference type="PhylomeDB" id="Q8U443"/>
<dbReference type="Proteomes" id="UP000001013">
    <property type="component" value="Chromosome"/>
</dbReference>
<dbReference type="GO" id="GO:1990904">
    <property type="term" value="C:ribonucleoprotein complex"/>
    <property type="evidence" value="ECO:0007669"/>
    <property type="project" value="UniProtKB-KW"/>
</dbReference>
<dbReference type="GO" id="GO:0005840">
    <property type="term" value="C:ribosome"/>
    <property type="evidence" value="ECO:0007669"/>
    <property type="project" value="UniProtKB-KW"/>
</dbReference>
<dbReference type="GO" id="GO:0003735">
    <property type="term" value="F:structural constituent of ribosome"/>
    <property type="evidence" value="ECO:0007669"/>
    <property type="project" value="InterPro"/>
</dbReference>
<dbReference type="GO" id="GO:0008270">
    <property type="term" value="F:zinc ion binding"/>
    <property type="evidence" value="ECO:0007669"/>
    <property type="project" value="UniProtKB-UniRule"/>
</dbReference>
<dbReference type="GO" id="GO:0006412">
    <property type="term" value="P:translation"/>
    <property type="evidence" value="ECO:0007669"/>
    <property type="project" value="UniProtKB-UniRule"/>
</dbReference>
<dbReference type="Gene3D" id="6.20.50.180">
    <property type="match status" value="1"/>
</dbReference>
<dbReference type="HAMAP" id="MF_00777">
    <property type="entry name" value="Ribosomal_eS31"/>
    <property type="match status" value="1"/>
</dbReference>
<dbReference type="InterPro" id="IPR002906">
    <property type="entry name" value="Ribosomal_eS31"/>
</dbReference>
<dbReference type="InterPro" id="IPR022845">
    <property type="entry name" value="Ribosomal_eS31_arc"/>
</dbReference>
<dbReference type="InterPro" id="IPR011332">
    <property type="entry name" value="Ribosomal_zn-bd"/>
</dbReference>
<dbReference type="NCBIfam" id="NF001669">
    <property type="entry name" value="PRK00432.1"/>
    <property type="match status" value="1"/>
</dbReference>
<dbReference type="Pfam" id="PF01599">
    <property type="entry name" value="Ribosomal_S27"/>
    <property type="match status" value="1"/>
</dbReference>
<dbReference type="SMART" id="SM01402">
    <property type="entry name" value="Ribosomal_S27"/>
    <property type="match status" value="1"/>
</dbReference>
<dbReference type="SUPFAM" id="SSF57829">
    <property type="entry name" value="Zn-binding ribosomal proteins"/>
    <property type="match status" value="1"/>
</dbReference>